<name>NRDR_CLOBB</name>
<proteinExistence type="inferred from homology"/>
<keyword id="KW-0067">ATP-binding</keyword>
<keyword id="KW-0238">DNA-binding</keyword>
<keyword id="KW-0479">Metal-binding</keyword>
<keyword id="KW-0547">Nucleotide-binding</keyword>
<keyword id="KW-0678">Repressor</keyword>
<keyword id="KW-0804">Transcription</keyword>
<keyword id="KW-0805">Transcription regulation</keyword>
<keyword id="KW-0862">Zinc</keyword>
<keyword id="KW-0863">Zinc-finger</keyword>
<gene>
    <name evidence="1" type="primary">nrdR</name>
    <name type="ordered locus">CLL_A1193</name>
</gene>
<accession>B2THP9</accession>
<organism>
    <name type="scientific">Clostridium botulinum (strain Eklund 17B / Type B)</name>
    <dbReference type="NCBI Taxonomy" id="935198"/>
    <lineage>
        <taxon>Bacteria</taxon>
        <taxon>Bacillati</taxon>
        <taxon>Bacillota</taxon>
        <taxon>Clostridia</taxon>
        <taxon>Eubacteriales</taxon>
        <taxon>Clostridiaceae</taxon>
        <taxon>Clostridium</taxon>
    </lineage>
</organism>
<comment type="function">
    <text evidence="1">Negatively regulates transcription of bacterial ribonucleotide reductase nrd genes and operons by binding to NrdR-boxes.</text>
</comment>
<comment type="cofactor">
    <cofactor evidence="1">
        <name>Zn(2+)</name>
        <dbReference type="ChEBI" id="CHEBI:29105"/>
    </cofactor>
    <text evidence="1">Binds 1 zinc ion.</text>
</comment>
<comment type="similarity">
    <text evidence="1">Belongs to the NrdR family.</text>
</comment>
<sequence>MKCPFCNFEESKVVDSRATDDNTTIRRRRECLNCNKRYTTYEKIEDFPVLVVKKDLARENFNKEKIINGLIIACQKRPVSRKQIEDIAYEIEKSISNRMVTEIASKDIGEMVMDKLKQVDEISYVRFASVYRQFKDINTFLEEIKNLVVN</sequence>
<evidence type="ECO:0000255" key="1">
    <source>
        <dbReference type="HAMAP-Rule" id="MF_00440"/>
    </source>
</evidence>
<dbReference type="EMBL" id="CP001056">
    <property type="protein sequence ID" value="ACD22965.1"/>
    <property type="molecule type" value="Genomic_DNA"/>
</dbReference>
<dbReference type="SMR" id="B2THP9"/>
<dbReference type="KEGG" id="cbk:CLL_A1193"/>
<dbReference type="PATRIC" id="fig|935198.13.peg.1138"/>
<dbReference type="HOGENOM" id="CLU_108412_0_0_9"/>
<dbReference type="Proteomes" id="UP000001195">
    <property type="component" value="Chromosome"/>
</dbReference>
<dbReference type="GO" id="GO:0005524">
    <property type="term" value="F:ATP binding"/>
    <property type="evidence" value="ECO:0007669"/>
    <property type="project" value="UniProtKB-KW"/>
</dbReference>
<dbReference type="GO" id="GO:0003677">
    <property type="term" value="F:DNA binding"/>
    <property type="evidence" value="ECO:0007669"/>
    <property type="project" value="UniProtKB-KW"/>
</dbReference>
<dbReference type="GO" id="GO:0008270">
    <property type="term" value="F:zinc ion binding"/>
    <property type="evidence" value="ECO:0007669"/>
    <property type="project" value="UniProtKB-UniRule"/>
</dbReference>
<dbReference type="GO" id="GO:0045892">
    <property type="term" value="P:negative regulation of DNA-templated transcription"/>
    <property type="evidence" value="ECO:0007669"/>
    <property type="project" value="UniProtKB-UniRule"/>
</dbReference>
<dbReference type="HAMAP" id="MF_00440">
    <property type="entry name" value="NrdR"/>
    <property type="match status" value="1"/>
</dbReference>
<dbReference type="InterPro" id="IPR005144">
    <property type="entry name" value="ATP-cone_dom"/>
</dbReference>
<dbReference type="InterPro" id="IPR055173">
    <property type="entry name" value="NrdR-like_N"/>
</dbReference>
<dbReference type="InterPro" id="IPR003796">
    <property type="entry name" value="RNR_NrdR-like"/>
</dbReference>
<dbReference type="NCBIfam" id="TIGR00244">
    <property type="entry name" value="transcriptional regulator NrdR"/>
    <property type="match status" value="1"/>
</dbReference>
<dbReference type="PANTHER" id="PTHR30455">
    <property type="entry name" value="TRANSCRIPTIONAL REPRESSOR NRDR"/>
    <property type="match status" value="1"/>
</dbReference>
<dbReference type="PANTHER" id="PTHR30455:SF2">
    <property type="entry name" value="TRANSCRIPTIONAL REPRESSOR NRDR"/>
    <property type="match status" value="1"/>
</dbReference>
<dbReference type="Pfam" id="PF03477">
    <property type="entry name" value="ATP-cone"/>
    <property type="match status" value="1"/>
</dbReference>
<dbReference type="Pfam" id="PF22811">
    <property type="entry name" value="Zn_ribbon_NrdR"/>
    <property type="match status" value="1"/>
</dbReference>
<dbReference type="PROSITE" id="PS51161">
    <property type="entry name" value="ATP_CONE"/>
    <property type="match status" value="1"/>
</dbReference>
<protein>
    <recommendedName>
        <fullName evidence="1">Transcriptional repressor NrdR</fullName>
    </recommendedName>
</protein>
<reference key="1">
    <citation type="submission" date="2008-04" db="EMBL/GenBank/DDBJ databases">
        <title>Complete sequence of Clostridium botulinum strain Eklund.</title>
        <authorList>
            <person name="Brinkac L.M."/>
            <person name="Brown J.L."/>
            <person name="Bruce D."/>
            <person name="Detter C."/>
            <person name="Munk C."/>
            <person name="Smith L.A."/>
            <person name="Smith T.J."/>
            <person name="Sutton G."/>
            <person name="Brettin T.S."/>
        </authorList>
    </citation>
    <scope>NUCLEOTIDE SEQUENCE [LARGE SCALE GENOMIC DNA]</scope>
    <source>
        <strain>Eklund 17B / Type B</strain>
    </source>
</reference>
<feature type="chain" id="PRO_1000124483" description="Transcriptional repressor NrdR">
    <location>
        <begin position="1"/>
        <end position="150"/>
    </location>
</feature>
<feature type="domain" description="ATP-cone" evidence="1">
    <location>
        <begin position="49"/>
        <end position="139"/>
    </location>
</feature>
<feature type="zinc finger region" evidence="1">
    <location>
        <begin position="3"/>
        <end position="34"/>
    </location>
</feature>